<comment type="function">
    <text evidence="1">The antigen 85 proteins (FbpA, FbpB, FbpC) are responsible for the high affinity of mycobacteria for fibronectin, a large adhesive glycoprotein, which facilitates the attachment of M.tuberculosis to murine alveolar macrophages (AMs). They also help to maintain the integrity of the cell wall by catalyzing the transfer of mycolic acids to cell wall arabinogalactan, and through the synthesis of alpha,alpha-trehalose dimycolate (TDM, cord factor). They catalyze the transfer of a mycoloyl residue from one molecule of alpha,alpha-trehalose monomycolate (TMM) to another TMM, leading to the formation of TDM. FbpA mediates triacylglycerol (TAG) formation with long-chain acyl-CoA as the acyl donor and 1,2-dipalmitoyl-sn-glycerol (1,2-dipalmitin) as the acyl acceptor. It has a preference for C26:0-CoA over C18:1-CoA (By similarity).</text>
</comment>
<comment type="catalytic activity">
    <reaction>
        <text>an acyl-CoA + a 1,2-diacyl-sn-glycerol = a triacyl-sn-glycerol + CoA</text>
        <dbReference type="Rhea" id="RHEA:10868"/>
        <dbReference type="ChEBI" id="CHEBI:17815"/>
        <dbReference type="ChEBI" id="CHEBI:57287"/>
        <dbReference type="ChEBI" id="CHEBI:58342"/>
        <dbReference type="ChEBI" id="CHEBI:64615"/>
        <dbReference type="EC" id="2.3.1.20"/>
    </reaction>
</comment>
<comment type="catalytic activity">
    <reaction>
        <text>2 alpha,alpha'-trehalose 6-mycolate = alpha,alpha'-trehalose 6,6'-bismycolate + alpha,alpha-trehalose</text>
        <dbReference type="Rhea" id="RHEA:23472"/>
        <dbReference type="ChEBI" id="CHEBI:16551"/>
        <dbReference type="ChEBI" id="CHEBI:18195"/>
        <dbReference type="ChEBI" id="CHEBI:18234"/>
        <dbReference type="EC" id="2.3.1.122"/>
    </reaction>
</comment>
<comment type="subunit">
    <text evidence="1">Homodimer.</text>
</comment>
<comment type="subcellular location">
    <subcellularLocation>
        <location>Secreted</location>
        <location>Cell wall</location>
    </subcellularLocation>
    <subcellularLocation>
        <location>Cytoplasm</location>
    </subcellularLocation>
</comment>
<comment type="similarity">
    <text evidence="2">Belongs to the mycobacterial A85 antigen family.</text>
</comment>
<proteinExistence type="inferred from homology"/>
<name>A85A_MYCBP</name>
<evidence type="ECO:0000250" key="1"/>
<evidence type="ECO:0000305" key="2"/>
<gene>
    <name type="primary">fbpA</name>
    <name type="synonym">mpt44</name>
    <name type="ordered locus">BCG_3866c</name>
</gene>
<dbReference type="EC" id="2.3.1.122"/>
<dbReference type="EC" id="2.3.1.20"/>
<dbReference type="EMBL" id="X53034">
    <property type="protein sequence ID" value="CAA37206.1"/>
    <property type="molecule type" value="Genomic_DNA"/>
</dbReference>
<dbReference type="EMBL" id="AM408590">
    <property type="protein sequence ID" value="CAL73856.1"/>
    <property type="molecule type" value="Genomic_DNA"/>
</dbReference>
<dbReference type="PIR" id="S10326">
    <property type="entry name" value="S10326"/>
</dbReference>
<dbReference type="RefSeq" id="WP_003900759.1">
    <property type="nucleotide sequence ID" value="NC_008769.1"/>
</dbReference>
<dbReference type="SMR" id="A1KQD8"/>
<dbReference type="ESTHER" id="myctu-a85a">
    <property type="family name" value="A85-Mycolyl-transferase"/>
</dbReference>
<dbReference type="GeneID" id="45427805"/>
<dbReference type="KEGG" id="mbb:BCG_3866c"/>
<dbReference type="HOGENOM" id="CLU_026624_3_1_11"/>
<dbReference type="Proteomes" id="UP000001472">
    <property type="component" value="Chromosome"/>
</dbReference>
<dbReference type="GO" id="GO:0005737">
    <property type="term" value="C:cytoplasm"/>
    <property type="evidence" value="ECO:0007669"/>
    <property type="project" value="UniProtKB-SubCell"/>
</dbReference>
<dbReference type="GO" id="GO:0005576">
    <property type="term" value="C:extracellular region"/>
    <property type="evidence" value="ECO:0007669"/>
    <property type="project" value="UniProtKB-KW"/>
</dbReference>
<dbReference type="GO" id="GO:0004144">
    <property type="term" value="F:diacylglycerol O-acyltransferase activity"/>
    <property type="evidence" value="ECO:0007669"/>
    <property type="project" value="UniProtKB-EC"/>
</dbReference>
<dbReference type="GO" id="GO:0050348">
    <property type="term" value="F:trehalose O-mycolyltransferase activity"/>
    <property type="evidence" value="ECO:0007669"/>
    <property type="project" value="UniProtKB-EC"/>
</dbReference>
<dbReference type="FunFam" id="3.40.50.1820:FF:000086">
    <property type="entry name" value="Diacylglycerol acyltransferase/mycolyltransferase Ag85C"/>
    <property type="match status" value="1"/>
</dbReference>
<dbReference type="Gene3D" id="3.40.50.1820">
    <property type="entry name" value="alpha/beta hydrolase"/>
    <property type="match status" value="1"/>
</dbReference>
<dbReference type="InterPro" id="IPR029058">
    <property type="entry name" value="AB_hydrolase_fold"/>
</dbReference>
<dbReference type="InterPro" id="IPR000801">
    <property type="entry name" value="Esterase-like"/>
</dbReference>
<dbReference type="InterPro" id="IPR050583">
    <property type="entry name" value="Mycobacterial_A85_antigen"/>
</dbReference>
<dbReference type="InterPro" id="IPR006311">
    <property type="entry name" value="TAT_signal"/>
</dbReference>
<dbReference type="PANTHER" id="PTHR48098:SF1">
    <property type="entry name" value="DIACYLGLYCEROL ACYLTRANSFERASE_MYCOLYLTRANSFERASE AG85A"/>
    <property type="match status" value="1"/>
</dbReference>
<dbReference type="PANTHER" id="PTHR48098">
    <property type="entry name" value="ENTEROCHELIN ESTERASE-RELATED"/>
    <property type="match status" value="1"/>
</dbReference>
<dbReference type="Pfam" id="PF00756">
    <property type="entry name" value="Esterase"/>
    <property type="match status" value="1"/>
</dbReference>
<dbReference type="SUPFAM" id="SSF53474">
    <property type="entry name" value="alpha/beta-Hydrolases"/>
    <property type="match status" value="1"/>
</dbReference>
<accession>A1KQD8</accession>
<accession>P0A4V3</accession>
<accession>P17944</accession>
<accession>P17996</accession>
<organism>
    <name type="scientific">Mycobacterium bovis (strain BCG / Pasteur 1173P2)</name>
    <dbReference type="NCBI Taxonomy" id="410289"/>
    <lineage>
        <taxon>Bacteria</taxon>
        <taxon>Bacillati</taxon>
        <taxon>Actinomycetota</taxon>
        <taxon>Actinomycetes</taxon>
        <taxon>Mycobacteriales</taxon>
        <taxon>Mycobacteriaceae</taxon>
        <taxon>Mycobacterium</taxon>
        <taxon>Mycobacterium tuberculosis complex</taxon>
    </lineage>
</organism>
<keyword id="KW-0012">Acyltransferase</keyword>
<keyword id="KW-0134">Cell wall</keyword>
<keyword id="KW-0963">Cytoplasm</keyword>
<keyword id="KW-1015">Disulfide bond</keyword>
<keyword id="KW-0964">Secreted</keyword>
<keyword id="KW-0732">Signal</keyword>
<keyword id="KW-0808">Transferase</keyword>
<protein>
    <recommendedName>
        <fullName>Diacylglycerol acyltransferase/mycolyltransferase Ag85A</fullName>
        <shortName>DGAT</shortName>
        <ecNumber>2.3.1.122</ecNumber>
        <ecNumber>2.3.1.20</ecNumber>
    </recommendedName>
    <alternativeName>
        <fullName>Acyl-CoA:diacylglycerol acyltransferase</fullName>
    </alternativeName>
    <alternativeName>
        <fullName>Antigen 85 complex A</fullName>
        <shortName>85A</shortName>
        <shortName>Ag85A</shortName>
    </alternativeName>
    <alternativeName>
        <fullName>Fibronectin-binding protein A</fullName>
        <shortName>Fbps A</shortName>
    </alternativeName>
</protein>
<feature type="signal peptide" evidence="1">
    <location>
        <begin position="1"/>
        <end position="42"/>
    </location>
</feature>
<feature type="chain" id="PRO_0000285177" description="Diacylglycerol acyltransferase/mycolyltransferase Ag85A">
    <location>
        <begin position="43"/>
        <end position="338"/>
    </location>
</feature>
<feature type="region of interest" description="Fibronectin-binding">
    <location>
        <begin position="101"/>
        <end position="111"/>
    </location>
</feature>
<feature type="active site" description="Nucleophile" evidence="1">
    <location>
        <position position="169"/>
    </location>
</feature>
<feature type="active site" evidence="1">
    <location>
        <position position="273"/>
    </location>
</feature>
<feature type="active site" evidence="1">
    <location>
        <position position="305"/>
    </location>
</feature>
<feature type="binding site" evidence="1">
    <location>
        <begin position="85"/>
        <end position="86"/>
    </location>
    <ligand>
        <name>substrate</name>
    </ligand>
</feature>
<feature type="binding site" evidence="1">
    <location>
        <position position="169"/>
    </location>
    <ligand>
        <name>substrate</name>
    </ligand>
</feature>
<feature type="binding site" evidence="1">
    <location>
        <position position="197"/>
    </location>
    <ligand>
        <name>substrate</name>
    </ligand>
</feature>
<feature type="binding site" evidence="1">
    <location>
        <begin position="275"/>
        <end position="278"/>
    </location>
    <ligand>
        <name>substrate</name>
    </ligand>
</feature>
<feature type="binding site" evidence="1">
    <location>
        <position position="282"/>
    </location>
    <ligand>
        <name>substrate</name>
    </ligand>
</feature>
<feature type="binding site" evidence="1">
    <location>
        <begin position="305"/>
        <end position="307"/>
    </location>
    <ligand>
        <name>substrate</name>
    </ligand>
</feature>
<feature type="disulfide bond" evidence="1">
    <location>
        <begin position="130"/>
        <end position="135"/>
    </location>
</feature>
<reference key="1">
    <citation type="journal article" date="1990" name="Nucleic Acids Res.">
        <title>Nucleotide sequence of the 32 kDa-protein gene (antigen 85 A) of Mycobacterium bovis BCG.</title>
        <authorList>
            <person name="de Wit L."/>
            <person name="de la Cuvellerie A."/>
            <person name="Ooms J."/>
            <person name="Content J."/>
        </authorList>
    </citation>
    <scope>NUCLEOTIDE SEQUENCE [GENOMIC DNA]</scope>
</reference>
<reference key="2">
    <citation type="journal article" date="2007" name="Proc. Natl. Acad. Sci. U.S.A.">
        <title>Genome plasticity of BCG and impact on vaccine efficacy.</title>
        <authorList>
            <person name="Brosch R."/>
            <person name="Gordon S.V."/>
            <person name="Garnier T."/>
            <person name="Eiglmeier K."/>
            <person name="Frigui W."/>
            <person name="Valenti P."/>
            <person name="Dos Santos S."/>
            <person name="Duthoy S."/>
            <person name="Lacroix C."/>
            <person name="Garcia-Pelayo C."/>
            <person name="Inwald J.K."/>
            <person name="Golby P."/>
            <person name="Garcia J.N."/>
            <person name="Hewinson R.G."/>
            <person name="Behr M.A."/>
            <person name="Quail M.A."/>
            <person name="Churcher C."/>
            <person name="Barrell B.G."/>
            <person name="Parkhill J."/>
            <person name="Cole S.T."/>
        </authorList>
    </citation>
    <scope>NUCLEOTIDE SEQUENCE [LARGE SCALE GENOMIC DNA]</scope>
    <source>
        <strain>BCG / Pasteur 1173P2</strain>
    </source>
</reference>
<sequence>MQLVDRVRGAVTGMSRRLVVGAVGAALVSGLVGAVGGTATAGAFSRPGLPVEYLQVPSPSMGRDIKVQFQSGGANSPALYLLDGLRAQDDFSGWDINTPAFEWYDQSGLSVVMPVGGQSSFYSDWYQPACGKAGCQTYKWETFLTSELPGWLQANRHVKPTGSAVVGLSMAASSALTLAIYHPQQFVYAGAMSGLLDPSQAMGPTLIGLAMGDAGGYKASDMWGPKEDPAWQRNDPLLNVGKLIANNTRVWVYCGNGKPSDLGGNNLPAKFLEGFVRTSNIKFQDAYNAGGGHNGVFDFPDSGTHSWEYWGAQLNAMKPDLQRALGATPNTGPAPQGA</sequence>